<evidence type="ECO:0000255" key="1">
    <source>
        <dbReference type="PROSITE-ProRule" id="PRU00108"/>
    </source>
</evidence>
<evidence type="ECO:0000256" key="2">
    <source>
        <dbReference type="SAM" id="MobiDB-lite"/>
    </source>
</evidence>
<evidence type="ECO:0000305" key="3"/>
<keyword id="KW-0217">Developmental protein</keyword>
<keyword id="KW-0238">DNA-binding</keyword>
<keyword id="KW-0371">Homeobox</keyword>
<keyword id="KW-0539">Nucleus</keyword>
<keyword id="KW-1267">Proteomics identification</keyword>
<keyword id="KW-1185">Reference proteome</keyword>
<keyword id="KW-0804">Transcription</keyword>
<keyword id="KW-0805">Transcription regulation</keyword>
<gene>
    <name type="primary">HOXC4</name>
    <name type="synonym">HOX3E</name>
</gene>
<sequence>MIMSSYLMDSNYIDPKFPPCEEYSQNSYIPEHSPEYYGRTRESGFQHHHQELYPPPPPRPSYPERQYSCTSLQGPGNSRGHGPAQAGHHHPEKSQSLCEPAPLSGASASPSPAPPACSQPAPDHPSSAASKQPIVYPWMKKIHVSTVNPNYNGGEPKRSRTAYTRQQVLELEKEFHYNRYLTRRRRIEIAHSLCLSERQIKIWFQNRRMKWKKDHRLPNTKVRSAPPAGAAPSTLSAATPGTSEDHSQSATPPEQQRAEDITRL</sequence>
<protein>
    <recommendedName>
        <fullName>Homeobox protein Hox-C4</fullName>
    </recommendedName>
    <alternativeName>
        <fullName>Homeobox protein CP19</fullName>
    </alternativeName>
    <alternativeName>
        <fullName>Homeobox protein Hox-3E</fullName>
    </alternativeName>
</protein>
<accession>P09017</accession>
<proteinExistence type="evidence at protein level"/>
<reference key="1">
    <citation type="journal article" date="1988" name="Nucleic Acids Res.">
        <title>At least three human homeoboxes on chromosome 12 belong to the same transcription unit.</title>
        <authorList>
            <person name="Simeone A."/>
            <person name="Pannese M."/>
            <person name="Acampora D."/>
            <person name="D'Esposito M."/>
            <person name="Boncinelli E."/>
        </authorList>
    </citation>
    <scope>NUCLEOTIDE SEQUENCE [MRNA]</scope>
</reference>
<reference key="2">
    <citation type="journal article" date="2002" name="Teratology">
        <title>Complete mutation analysis panel of the 39 human HOX genes.</title>
        <authorList>
            <person name="Kosaki K."/>
            <person name="Kosaki R."/>
            <person name="Suzuki T."/>
            <person name="Yoshihashi H."/>
            <person name="Takahashi T."/>
            <person name="Sasaki K."/>
            <person name="Tomita M."/>
            <person name="McGinnis W."/>
            <person name="Matsuo N."/>
        </authorList>
    </citation>
    <scope>NUCLEOTIDE SEQUENCE [GENOMIC DNA]</scope>
</reference>
<reference key="3">
    <citation type="journal article" date="2006" name="Nature">
        <title>The finished DNA sequence of human chromosome 12.</title>
        <authorList>
            <person name="Scherer S.E."/>
            <person name="Muzny D.M."/>
            <person name="Buhay C.J."/>
            <person name="Chen R."/>
            <person name="Cree A."/>
            <person name="Ding Y."/>
            <person name="Dugan-Rocha S."/>
            <person name="Gill R."/>
            <person name="Gunaratne P."/>
            <person name="Harris R.A."/>
            <person name="Hawes A.C."/>
            <person name="Hernandez J."/>
            <person name="Hodgson A.V."/>
            <person name="Hume J."/>
            <person name="Jackson A."/>
            <person name="Khan Z.M."/>
            <person name="Kovar-Smith C."/>
            <person name="Lewis L.R."/>
            <person name="Lozado R.J."/>
            <person name="Metzker M.L."/>
            <person name="Milosavljevic A."/>
            <person name="Miner G.R."/>
            <person name="Montgomery K.T."/>
            <person name="Morgan M.B."/>
            <person name="Nazareth L.V."/>
            <person name="Scott G."/>
            <person name="Sodergren E."/>
            <person name="Song X.-Z."/>
            <person name="Steffen D."/>
            <person name="Lovering R.C."/>
            <person name="Wheeler D.A."/>
            <person name="Worley K.C."/>
            <person name="Yuan Y."/>
            <person name="Zhang Z."/>
            <person name="Adams C.Q."/>
            <person name="Ansari-Lari M.A."/>
            <person name="Ayele M."/>
            <person name="Brown M.J."/>
            <person name="Chen G."/>
            <person name="Chen Z."/>
            <person name="Clerc-Blankenburg K.P."/>
            <person name="Davis C."/>
            <person name="Delgado O."/>
            <person name="Dinh H.H."/>
            <person name="Draper H."/>
            <person name="Gonzalez-Garay M.L."/>
            <person name="Havlak P."/>
            <person name="Jackson L.R."/>
            <person name="Jacob L.S."/>
            <person name="Kelly S.H."/>
            <person name="Li L."/>
            <person name="Li Z."/>
            <person name="Liu J."/>
            <person name="Liu W."/>
            <person name="Lu J."/>
            <person name="Maheshwari M."/>
            <person name="Nguyen B.-V."/>
            <person name="Okwuonu G.O."/>
            <person name="Pasternak S."/>
            <person name="Perez L.M."/>
            <person name="Plopper F.J.H."/>
            <person name="Santibanez J."/>
            <person name="Shen H."/>
            <person name="Tabor P.E."/>
            <person name="Verduzco D."/>
            <person name="Waldron L."/>
            <person name="Wang Q."/>
            <person name="Williams G.A."/>
            <person name="Zhang J."/>
            <person name="Zhou J."/>
            <person name="Allen C.C."/>
            <person name="Amin A.G."/>
            <person name="Anyalebechi V."/>
            <person name="Bailey M."/>
            <person name="Barbaria J.A."/>
            <person name="Bimage K.E."/>
            <person name="Bryant N.P."/>
            <person name="Burch P.E."/>
            <person name="Burkett C.E."/>
            <person name="Burrell K.L."/>
            <person name="Calderon E."/>
            <person name="Cardenas V."/>
            <person name="Carter K."/>
            <person name="Casias K."/>
            <person name="Cavazos I."/>
            <person name="Cavazos S.R."/>
            <person name="Ceasar H."/>
            <person name="Chacko J."/>
            <person name="Chan S.N."/>
            <person name="Chavez D."/>
            <person name="Christopoulos C."/>
            <person name="Chu J."/>
            <person name="Cockrell R."/>
            <person name="Cox C.D."/>
            <person name="Dang M."/>
            <person name="Dathorne S.R."/>
            <person name="David R."/>
            <person name="Davis C.M."/>
            <person name="Davy-Carroll L."/>
            <person name="Deshazo D.R."/>
            <person name="Donlin J.E."/>
            <person name="D'Souza L."/>
            <person name="Eaves K.A."/>
            <person name="Egan A."/>
            <person name="Emery-Cohen A.J."/>
            <person name="Escotto M."/>
            <person name="Flagg N."/>
            <person name="Forbes L.D."/>
            <person name="Gabisi A.M."/>
            <person name="Garza M."/>
            <person name="Hamilton C."/>
            <person name="Henderson N."/>
            <person name="Hernandez O."/>
            <person name="Hines S."/>
            <person name="Hogues M.E."/>
            <person name="Huang M."/>
            <person name="Idlebird D.G."/>
            <person name="Johnson R."/>
            <person name="Jolivet A."/>
            <person name="Jones S."/>
            <person name="Kagan R."/>
            <person name="King L.M."/>
            <person name="Leal B."/>
            <person name="Lebow H."/>
            <person name="Lee S."/>
            <person name="LeVan J.M."/>
            <person name="Lewis L.C."/>
            <person name="London P."/>
            <person name="Lorensuhewa L.M."/>
            <person name="Loulseged H."/>
            <person name="Lovett D.A."/>
            <person name="Lucier A."/>
            <person name="Lucier R.L."/>
            <person name="Ma J."/>
            <person name="Madu R.C."/>
            <person name="Mapua P."/>
            <person name="Martindale A.D."/>
            <person name="Martinez E."/>
            <person name="Massey E."/>
            <person name="Mawhiney S."/>
            <person name="Meador M.G."/>
            <person name="Mendez S."/>
            <person name="Mercado C."/>
            <person name="Mercado I.C."/>
            <person name="Merritt C.E."/>
            <person name="Miner Z.L."/>
            <person name="Minja E."/>
            <person name="Mitchell T."/>
            <person name="Mohabbat F."/>
            <person name="Mohabbat K."/>
            <person name="Montgomery B."/>
            <person name="Moore N."/>
            <person name="Morris S."/>
            <person name="Munidasa M."/>
            <person name="Ngo R.N."/>
            <person name="Nguyen N.B."/>
            <person name="Nickerson E."/>
            <person name="Nwaokelemeh O.O."/>
            <person name="Nwokenkwo S."/>
            <person name="Obregon M."/>
            <person name="Oguh M."/>
            <person name="Oragunye N."/>
            <person name="Oviedo R.J."/>
            <person name="Parish B.J."/>
            <person name="Parker D.N."/>
            <person name="Parrish J."/>
            <person name="Parks K.L."/>
            <person name="Paul H.A."/>
            <person name="Payton B.A."/>
            <person name="Perez A."/>
            <person name="Perrin W."/>
            <person name="Pickens A."/>
            <person name="Primus E.L."/>
            <person name="Pu L.-L."/>
            <person name="Puazo M."/>
            <person name="Quiles M.M."/>
            <person name="Quiroz J.B."/>
            <person name="Rabata D."/>
            <person name="Reeves K."/>
            <person name="Ruiz S.J."/>
            <person name="Shao H."/>
            <person name="Sisson I."/>
            <person name="Sonaike T."/>
            <person name="Sorelle R.P."/>
            <person name="Sutton A.E."/>
            <person name="Svatek A.F."/>
            <person name="Svetz L.A."/>
            <person name="Tamerisa K.S."/>
            <person name="Taylor T.R."/>
            <person name="Teague B."/>
            <person name="Thomas N."/>
            <person name="Thorn R.D."/>
            <person name="Trejos Z.Y."/>
            <person name="Trevino B.K."/>
            <person name="Ukegbu O.N."/>
            <person name="Urban J.B."/>
            <person name="Vasquez L.I."/>
            <person name="Vera V.A."/>
            <person name="Villasana D.M."/>
            <person name="Wang L."/>
            <person name="Ward-Moore S."/>
            <person name="Warren J.T."/>
            <person name="Wei X."/>
            <person name="White F."/>
            <person name="Williamson A.L."/>
            <person name="Wleczyk R."/>
            <person name="Wooden H.S."/>
            <person name="Wooden S.H."/>
            <person name="Yen J."/>
            <person name="Yoon L."/>
            <person name="Yoon V."/>
            <person name="Zorrilla S.E."/>
            <person name="Nelson D."/>
            <person name="Kucherlapati R."/>
            <person name="Weinstock G."/>
            <person name="Gibbs R.A."/>
        </authorList>
    </citation>
    <scope>NUCLEOTIDE SEQUENCE [LARGE SCALE GENOMIC DNA]</scope>
</reference>
<reference key="4">
    <citation type="journal article" date="1989" name="Genome">
        <title>Organization of human class I homeobox genes.</title>
        <authorList>
            <person name="Boncinelli E."/>
            <person name="Acampora D."/>
            <person name="Pannese M."/>
            <person name="D'Esposito M."/>
            <person name="Somma R."/>
            <person name="Gaudino G."/>
            <person name="Stornaiuolo A."/>
            <person name="Cafiero M."/>
            <person name="Faiella A."/>
            <person name="Simeone A."/>
        </authorList>
    </citation>
    <scope>NUCLEOTIDE SEQUENCE [GENOMIC DNA] OF 156-221</scope>
</reference>
<dbReference type="EMBL" id="X07495">
    <property type="protein sequence ID" value="CAA30376.1"/>
    <property type="molecule type" value="mRNA"/>
</dbReference>
<dbReference type="EMBL" id="AY014298">
    <property type="protein sequence ID" value="AAG42145.1"/>
    <property type="molecule type" value="Genomic_DNA"/>
</dbReference>
<dbReference type="EMBL" id="AY014297">
    <property type="protein sequence ID" value="AAG42145.1"/>
    <property type="status" value="JOINED"/>
    <property type="molecule type" value="Genomic_DNA"/>
</dbReference>
<dbReference type="EMBL" id="AC023794">
    <property type="status" value="NOT_ANNOTATED_CDS"/>
    <property type="molecule type" value="Genomic_DNA"/>
</dbReference>
<dbReference type="CCDS" id="CCDS8873.1"/>
<dbReference type="PIR" id="S01030">
    <property type="entry name" value="WJHU3E"/>
</dbReference>
<dbReference type="RefSeq" id="NP_055435.2">
    <property type="nucleotide sequence ID" value="NM_014620.5"/>
</dbReference>
<dbReference type="RefSeq" id="NP_705897.1">
    <property type="nucleotide sequence ID" value="NM_153633.3"/>
</dbReference>
<dbReference type="SMR" id="P09017"/>
<dbReference type="BioGRID" id="109461">
    <property type="interactions" value="35"/>
</dbReference>
<dbReference type="FunCoup" id="P09017">
    <property type="interactions" value="1899"/>
</dbReference>
<dbReference type="IntAct" id="P09017">
    <property type="interactions" value="45"/>
</dbReference>
<dbReference type="MINT" id="P09017"/>
<dbReference type="STRING" id="9606.ENSP00000399808"/>
<dbReference type="GlyGen" id="P09017">
    <property type="glycosylation" value="2 sites"/>
</dbReference>
<dbReference type="iPTMnet" id="P09017"/>
<dbReference type="PhosphoSitePlus" id="P09017"/>
<dbReference type="BioMuta" id="HOXC4"/>
<dbReference type="DMDM" id="281185468"/>
<dbReference type="jPOST" id="P09017"/>
<dbReference type="MassIVE" id="P09017"/>
<dbReference type="PaxDb" id="9606-ENSP00000399808"/>
<dbReference type="PeptideAtlas" id="P09017"/>
<dbReference type="ProteomicsDB" id="52186"/>
<dbReference type="Pumba" id="P09017"/>
<dbReference type="Antibodypedia" id="27312">
    <property type="antibodies" value="307 antibodies from 28 providers"/>
</dbReference>
<dbReference type="DNASU" id="3221"/>
<dbReference type="Ensembl" id="ENST00000303406.4">
    <property type="protein sequence ID" value="ENSP00000305973.4"/>
    <property type="gene ID" value="ENSG00000198353.8"/>
</dbReference>
<dbReference type="Ensembl" id="ENST00000430889.3">
    <property type="protein sequence ID" value="ENSP00000399808.2"/>
    <property type="gene ID" value="ENSG00000198353.8"/>
</dbReference>
<dbReference type="GeneID" id="3221"/>
<dbReference type="KEGG" id="hsa:3221"/>
<dbReference type="MANE-Select" id="ENST00000430889.3">
    <property type="protein sequence ID" value="ENSP00000399808.2"/>
    <property type="RefSeq nucleotide sequence ID" value="NM_153633.3"/>
    <property type="RefSeq protein sequence ID" value="NP_705897.1"/>
</dbReference>
<dbReference type="UCSC" id="uc001seu.5">
    <property type="organism name" value="human"/>
</dbReference>
<dbReference type="AGR" id="HGNC:5126"/>
<dbReference type="CTD" id="3221"/>
<dbReference type="DisGeNET" id="3221"/>
<dbReference type="GeneCards" id="HOXC4"/>
<dbReference type="HGNC" id="HGNC:5126">
    <property type="gene designation" value="HOXC4"/>
</dbReference>
<dbReference type="HPA" id="ENSG00000198353">
    <property type="expression patterns" value="Tissue enhanced (fallopian)"/>
</dbReference>
<dbReference type="MIM" id="142974">
    <property type="type" value="gene"/>
</dbReference>
<dbReference type="neXtProt" id="NX_P09017"/>
<dbReference type="OpenTargets" id="ENSG00000198353"/>
<dbReference type="PharmGKB" id="PA29401"/>
<dbReference type="VEuPathDB" id="HostDB:ENSG00000198353"/>
<dbReference type="eggNOG" id="KOG0489">
    <property type="taxonomic scope" value="Eukaryota"/>
</dbReference>
<dbReference type="GeneTree" id="ENSGT00940000160794"/>
<dbReference type="HOGENOM" id="CLU_061398_0_0_1"/>
<dbReference type="InParanoid" id="P09017"/>
<dbReference type="OMA" id="QDRQYNC"/>
<dbReference type="OrthoDB" id="17574at9604"/>
<dbReference type="PAN-GO" id="P09017">
    <property type="GO annotations" value="6 GO annotations based on evolutionary models"/>
</dbReference>
<dbReference type="PhylomeDB" id="P09017"/>
<dbReference type="TreeFam" id="TF352857"/>
<dbReference type="PathwayCommons" id="P09017"/>
<dbReference type="Reactome" id="R-HSA-5617472">
    <property type="pathway name" value="Activation of anterior HOX genes in hindbrain development during early embryogenesis"/>
</dbReference>
<dbReference type="SignaLink" id="P09017"/>
<dbReference type="SIGNOR" id="P09017"/>
<dbReference type="BioGRID-ORCS" id="3221">
    <property type="hits" value="22 hits in 1156 CRISPR screens"/>
</dbReference>
<dbReference type="ChiTaRS" id="HOXC4">
    <property type="organism name" value="human"/>
</dbReference>
<dbReference type="GeneWiki" id="HOXC4"/>
<dbReference type="GenomeRNAi" id="3221"/>
<dbReference type="Pharos" id="P09017">
    <property type="development level" value="Tbio"/>
</dbReference>
<dbReference type="PRO" id="PR:P09017"/>
<dbReference type="Proteomes" id="UP000005640">
    <property type="component" value="Chromosome 12"/>
</dbReference>
<dbReference type="RNAct" id="P09017">
    <property type="molecule type" value="protein"/>
</dbReference>
<dbReference type="Bgee" id="ENSG00000198353">
    <property type="expression patterns" value="Expressed in right uterine tube and 176 other cell types or tissues"/>
</dbReference>
<dbReference type="ExpressionAtlas" id="P09017">
    <property type="expression patterns" value="baseline and differential"/>
</dbReference>
<dbReference type="GO" id="GO:0000785">
    <property type="term" value="C:chromatin"/>
    <property type="evidence" value="ECO:0000247"/>
    <property type="project" value="NTNU_SB"/>
</dbReference>
<dbReference type="GO" id="GO:0005654">
    <property type="term" value="C:nucleoplasm"/>
    <property type="evidence" value="ECO:0000314"/>
    <property type="project" value="HPA"/>
</dbReference>
<dbReference type="GO" id="GO:0001228">
    <property type="term" value="F:DNA-binding transcription activator activity, RNA polymerase II-specific"/>
    <property type="evidence" value="ECO:0000314"/>
    <property type="project" value="NTNU_SB"/>
</dbReference>
<dbReference type="GO" id="GO:0000981">
    <property type="term" value="F:DNA-binding transcription factor activity, RNA polymerase II-specific"/>
    <property type="evidence" value="ECO:0000247"/>
    <property type="project" value="NTNU_SB"/>
</dbReference>
<dbReference type="GO" id="GO:0071837">
    <property type="term" value="F:HMG box domain binding"/>
    <property type="evidence" value="ECO:0007669"/>
    <property type="project" value="Ensembl"/>
</dbReference>
<dbReference type="GO" id="GO:0000978">
    <property type="term" value="F:RNA polymerase II cis-regulatory region sequence-specific DNA binding"/>
    <property type="evidence" value="ECO:0000314"/>
    <property type="project" value="NTNU_SB"/>
</dbReference>
<dbReference type="GO" id="GO:1990837">
    <property type="term" value="F:sequence-specific double-stranded DNA binding"/>
    <property type="evidence" value="ECO:0000314"/>
    <property type="project" value="ARUK-UCL"/>
</dbReference>
<dbReference type="GO" id="GO:0009952">
    <property type="term" value="P:anterior/posterior pattern specification"/>
    <property type="evidence" value="ECO:0000318"/>
    <property type="project" value="GO_Central"/>
</dbReference>
<dbReference type="GO" id="GO:0051216">
    <property type="term" value="P:cartilage development"/>
    <property type="evidence" value="ECO:0007669"/>
    <property type="project" value="Ensembl"/>
</dbReference>
<dbReference type="GO" id="GO:0048704">
    <property type="term" value="P:embryonic skeletal system morphogenesis"/>
    <property type="evidence" value="ECO:0000318"/>
    <property type="project" value="GO_Central"/>
</dbReference>
<dbReference type="GO" id="GO:0045944">
    <property type="term" value="P:positive regulation of transcription by RNA polymerase II"/>
    <property type="evidence" value="ECO:0000314"/>
    <property type="project" value="NTNU_SB"/>
</dbReference>
<dbReference type="CDD" id="cd00086">
    <property type="entry name" value="homeodomain"/>
    <property type="match status" value="1"/>
</dbReference>
<dbReference type="FunFam" id="1.10.10.60:FF:000029">
    <property type="entry name" value="Homeobox protein Hox-D4"/>
    <property type="match status" value="1"/>
</dbReference>
<dbReference type="Gene3D" id="1.10.10.60">
    <property type="entry name" value="Homeodomain-like"/>
    <property type="match status" value="1"/>
</dbReference>
<dbReference type="InterPro" id="IPR050609">
    <property type="entry name" value="Antp_homeobox_Deformed_sf"/>
</dbReference>
<dbReference type="InterPro" id="IPR001356">
    <property type="entry name" value="HD"/>
</dbReference>
<dbReference type="InterPro" id="IPR020479">
    <property type="entry name" value="HD_metazoa"/>
</dbReference>
<dbReference type="InterPro" id="IPR017995">
    <property type="entry name" value="Homeobox_antennapedia"/>
</dbReference>
<dbReference type="InterPro" id="IPR001827">
    <property type="entry name" value="Homeobox_Antennapedia_CS"/>
</dbReference>
<dbReference type="InterPro" id="IPR017970">
    <property type="entry name" value="Homeobox_CS"/>
</dbReference>
<dbReference type="InterPro" id="IPR009057">
    <property type="entry name" value="Homeodomain-like_sf"/>
</dbReference>
<dbReference type="PANTHER" id="PTHR45771:SF9">
    <property type="entry name" value="HOMEOBOX PROTEIN HOX-C4"/>
    <property type="match status" value="1"/>
</dbReference>
<dbReference type="PANTHER" id="PTHR45771">
    <property type="entry name" value="HOMEOTIC PROTEIN DEFORMED"/>
    <property type="match status" value="1"/>
</dbReference>
<dbReference type="Pfam" id="PF00046">
    <property type="entry name" value="Homeodomain"/>
    <property type="match status" value="1"/>
</dbReference>
<dbReference type="PRINTS" id="PR00025">
    <property type="entry name" value="ANTENNAPEDIA"/>
</dbReference>
<dbReference type="PRINTS" id="PR00024">
    <property type="entry name" value="HOMEOBOX"/>
</dbReference>
<dbReference type="SMART" id="SM00389">
    <property type="entry name" value="HOX"/>
    <property type="match status" value="1"/>
</dbReference>
<dbReference type="SUPFAM" id="SSF46689">
    <property type="entry name" value="Homeodomain-like"/>
    <property type="match status" value="1"/>
</dbReference>
<dbReference type="PROSITE" id="PS00032">
    <property type="entry name" value="ANTENNAPEDIA"/>
    <property type="match status" value="1"/>
</dbReference>
<dbReference type="PROSITE" id="PS00027">
    <property type="entry name" value="HOMEOBOX_1"/>
    <property type="match status" value="1"/>
</dbReference>
<dbReference type="PROSITE" id="PS50071">
    <property type="entry name" value="HOMEOBOX_2"/>
    <property type="match status" value="1"/>
</dbReference>
<comment type="function">
    <text>Sequence-specific transcription factor which is part of a developmental regulatory system that provides cells with specific positional identities on the anterior-posterior axis.</text>
</comment>
<comment type="interaction">
    <interactant intactId="EBI-3923226">
        <id>P09017</id>
    </interactant>
    <interactant intactId="EBI-640741">
        <id>P01023</id>
        <label>A2M</label>
    </interactant>
    <organismsDiffer>false</organismsDiffer>
    <experiments>3</experiments>
</comment>
<comment type="interaction">
    <interactant intactId="EBI-3923226">
        <id>P09017</id>
    </interactant>
    <interactant intactId="EBI-930964">
        <id>P54253</id>
        <label>ATXN1</label>
    </interactant>
    <organismsDiffer>false</organismsDiffer>
    <experiments>6</experiments>
</comment>
<comment type="interaction">
    <interactant intactId="EBI-3923226">
        <id>P09017</id>
    </interactant>
    <interactant intactId="EBI-745579">
        <id>P49761</id>
        <label>CLK3</label>
    </interactant>
    <organismsDiffer>false</organismsDiffer>
    <experiments>3</experiments>
</comment>
<comment type="interaction">
    <interactant intactId="EBI-3923226">
        <id>P09017</id>
    </interactant>
    <interactant intactId="EBI-347804">
        <id>P68400</id>
        <label>CSNK2A1</label>
    </interactant>
    <organismsDiffer>false</organismsDiffer>
    <experiments>3</experiments>
</comment>
<comment type="interaction">
    <interactant intactId="EBI-3923226">
        <id>P09017</id>
    </interactant>
    <interactant intactId="EBI-10976677">
        <id>G5E9A7</id>
        <label>DMWD</label>
    </interactant>
    <organismsDiffer>false</organismsDiffer>
    <experiments>3</experiments>
</comment>
<comment type="interaction">
    <interactant intactId="EBI-3923226">
        <id>P09017</id>
    </interactant>
    <interactant intactId="EBI-10968534">
        <id>P50570-2</id>
        <label>DNM2</label>
    </interactant>
    <organismsDiffer>false</organismsDiffer>
    <experiments>3</experiments>
</comment>
<comment type="interaction">
    <interactant intactId="EBI-3923226">
        <id>P09017</id>
    </interactant>
    <interactant intactId="EBI-371876">
        <id>Q9NQT4</id>
        <label>EXOSC5</label>
    </interactant>
    <organismsDiffer>false</organismsDiffer>
    <experiments>3</experiments>
</comment>
<comment type="interaction">
    <interactant intactId="EBI-3923226">
        <id>P09017</id>
    </interactant>
    <interactant intactId="EBI-11110431">
        <id>Q8TB36</id>
        <label>GDAP1</label>
    </interactant>
    <organismsDiffer>false</organismsDiffer>
    <experiments>3</experiments>
</comment>
<comment type="interaction">
    <interactant intactId="EBI-3923226">
        <id>P09017</id>
    </interactant>
    <interactant intactId="EBI-747754">
        <id>P28799</id>
        <label>GRN</label>
    </interactant>
    <organismsDiffer>false</organismsDiffer>
    <experiments>3</experiments>
</comment>
<comment type="interaction">
    <interactant intactId="EBI-3923226">
        <id>P09017</id>
    </interactant>
    <interactant intactId="EBI-8561769">
        <id>Q5SUL5</id>
        <label>HLA-A</label>
    </interactant>
    <organismsDiffer>false</organismsDiffer>
    <experiments>3</experiments>
</comment>
<comment type="interaction">
    <interactant intactId="EBI-3923226">
        <id>P09017</id>
    </interactant>
    <interactant intactId="EBI-466029">
        <id>P42858</id>
        <label>HTT</label>
    </interactant>
    <organismsDiffer>false</organismsDiffer>
    <experiments>16</experiments>
</comment>
<comment type="interaction">
    <interactant intactId="EBI-3923226">
        <id>P09017</id>
    </interactant>
    <interactant intactId="EBI-399080">
        <id>Q92993</id>
        <label>KAT5</label>
    </interactant>
    <organismsDiffer>false</organismsDiffer>
    <experiments>3</experiments>
</comment>
<comment type="interaction">
    <interactant intactId="EBI-3923226">
        <id>P09017</id>
    </interactant>
    <interactant intactId="EBI-10975473">
        <id>O60333-2</id>
        <label>KIF1B</label>
    </interactant>
    <organismsDiffer>false</organismsDiffer>
    <experiments>3</experiments>
</comment>
<comment type="interaction">
    <interactant intactId="EBI-3923226">
        <id>P09017</id>
    </interactant>
    <interactant intactId="EBI-11742507">
        <id>Q8TAP4-4</id>
        <label>LMO3</label>
    </interactant>
    <organismsDiffer>false</organismsDiffer>
    <experiments>3</experiments>
</comment>
<comment type="interaction">
    <interactant intactId="EBI-3923226">
        <id>P09017</id>
    </interactant>
    <interactant intactId="EBI-713635">
        <id>O43639</id>
        <label>NCK2</label>
    </interactant>
    <organismsDiffer>false</organismsDiffer>
    <experiments>3</experiments>
</comment>
<comment type="interaction">
    <interactant intactId="EBI-3923226">
        <id>P09017</id>
    </interactant>
    <interactant intactId="EBI-3390132">
        <id>Q9BZ95</id>
        <label>NSD3</label>
    </interactant>
    <organismsDiffer>false</organismsDiffer>
    <experiments>2</experiments>
</comment>
<comment type="interaction">
    <interactant intactId="EBI-3923226">
        <id>P09017</id>
    </interactant>
    <interactant intactId="EBI-473160">
        <id>Q8N2W9</id>
        <label>PIAS4</label>
    </interactant>
    <organismsDiffer>false</organismsDiffer>
    <experiments>3</experiments>
</comment>
<comment type="interaction">
    <interactant intactId="EBI-3923226">
        <id>P09017</id>
    </interactant>
    <interactant intactId="EBI-359252">
        <id>P23284</id>
        <label>PPIB</label>
    </interactant>
    <organismsDiffer>false</organismsDiffer>
    <experiments>3</experiments>
</comment>
<comment type="interaction">
    <interactant intactId="EBI-3923226">
        <id>P09017</id>
    </interactant>
    <interactant intactId="EBI-396669">
        <id>Q9Y3C5</id>
        <label>RNF11</label>
    </interactant>
    <organismsDiffer>false</organismsDiffer>
    <experiments>3</experiments>
</comment>
<comment type="interaction">
    <interactant intactId="EBI-3923226">
        <id>P09017</id>
    </interactant>
    <interactant intactId="EBI-747925">
        <id>Q9NQG5</id>
        <label>RPRD1B</label>
    </interactant>
    <organismsDiffer>false</organismsDiffer>
    <experiments>3</experiments>
</comment>
<comment type="interaction">
    <interactant intactId="EBI-3923226">
        <id>P09017</id>
    </interactant>
    <interactant intactId="EBI-9090795">
        <id>Q15047-2</id>
        <label>SETDB1</label>
    </interactant>
    <organismsDiffer>false</organismsDiffer>
    <experiments>3</experiments>
</comment>
<comment type="interaction">
    <interactant intactId="EBI-3923226">
        <id>P09017</id>
    </interactant>
    <interactant intactId="EBI-395421">
        <id>Q16637</id>
        <label>SMN2</label>
    </interactant>
    <organismsDiffer>false</organismsDiffer>
    <experiments>3</experiments>
</comment>
<comment type="interaction">
    <interactant intactId="EBI-3923226">
        <id>P09017</id>
    </interactant>
    <interactant intactId="EBI-985879">
        <id>P37840</id>
        <label>SNCA</label>
    </interactant>
    <organismsDiffer>false</organismsDiffer>
    <experiments>3</experiments>
</comment>
<comment type="interaction">
    <interactant intactId="EBI-3923226">
        <id>P09017</id>
    </interactant>
    <interactant intactId="EBI-990792">
        <id>P00441</id>
        <label>SOD1</label>
    </interactant>
    <organismsDiffer>false</organismsDiffer>
    <experiments>3</experiments>
</comment>
<comment type="interaction">
    <interactant intactId="EBI-3923226">
        <id>P09017</id>
    </interactant>
    <interactant intactId="EBI-5235340">
        <id>Q7Z699</id>
        <label>SPRED1</label>
    </interactant>
    <organismsDiffer>false</organismsDiffer>
    <experiments>3</experiments>
</comment>
<comment type="interaction">
    <interactant intactId="EBI-3923226">
        <id>P09017</id>
    </interactant>
    <interactant intactId="EBI-349968">
        <id>O43463</id>
        <label>SUV39H1</label>
    </interactant>
    <organismsDiffer>false</organismsDiffer>
    <experiments>2</experiments>
</comment>
<comment type="interaction">
    <interactant intactId="EBI-3923226">
        <id>P09017</id>
    </interactant>
    <interactant intactId="EBI-12806590">
        <id>Q86WV8</id>
        <label>TSC1</label>
    </interactant>
    <organismsDiffer>false</organismsDiffer>
    <experiments>3</experiments>
</comment>
<comment type="interaction">
    <interactant intactId="EBI-3923226">
        <id>P09017</id>
    </interactant>
    <interactant intactId="EBI-359832">
        <id>P61981</id>
        <label>YWHAG</label>
    </interactant>
    <organismsDiffer>false</organismsDiffer>
    <experiments>3</experiments>
</comment>
<comment type="subcellular location">
    <subcellularLocation>
        <location>Nucleus</location>
    </subcellularLocation>
</comment>
<comment type="similarity">
    <text evidence="3">Belongs to the Antp homeobox family. Deformed subfamily.</text>
</comment>
<name>HXC4_HUMAN</name>
<organism>
    <name type="scientific">Homo sapiens</name>
    <name type="common">Human</name>
    <dbReference type="NCBI Taxonomy" id="9606"/>
    <lineage>
        <taxon>Eukaryota</taxon>
        <taxon>Metazoa</taxon>
        <taxon>Chordata</taxon>
        <taxon>Craniata</taxon>
        <taxon>Vertebrata</taxon>
        <taxon>Euteleostomi</taxon>
        <taxon>Mammalia</taxon>
        <taxon>Eutheria</taxon>
        <taxon>Euarchontoglires</taxon>
        <taxon>Primates</taxon>
        <taxon>Haplorrhini</taxon>
        <taxon>Catarrhini</taxon>
        <taxon>Hominidae</taxon>
        <taxon>Homo</taxon>
    </lineage>
</organism>
<feature type="chain" id="PRO_0000200164" description="Homeobox protein Hox-C4">
    <location>
        <begin position="1"/>
        <end position="264"/>
    </location>
</feature>
<feature type="DNA-binding region" description="Homeobox" evidence="1">
    <location>
        <begin position="156"/>
        <end position="215"/>
    </location>
</feature>
<feature type="region of interest" description="Disordered" evidence="2">
    <location>
        <begin position="19"/>
        <end position="130"/>
    </location>
</feature>
<feature type="region of interest" description="Disordered" evidence="2">
    <location>
        <begin position="214"/>
        <end position="264"/>
    </location>
</feature>
<feature type="short sequence motif" description="Antp-type hexapeptide">
    <location>
        <begin position="135"/>
        <end position="140"/>
    </location>
</feature>
<feature type="compositionally biased region" description="Basic and acidic residues" evidence="2">
    <location>
        <begin position="32"/>
        <end position="51"/>
    </location>
</feature>
<feature type="compositionally biased region" description="Low complexity" evidence="2">
    <location>
        <begin position="100"/>
        <end position="110"/>
    </location>
</feature>
<feature type="compositionally biased region" description="Polar residues" evidence="2">
    <location>
        <begin position="233"/>
        <end position="254"/>
    </location>
</feature>
<feature type="sequence variant" id="VAR_055961" description="In dbSNP:rs11835301.">
    <original>R</original>
    <variation>L</variation>
    <location>
        <position position="158"/>
    </location>
</feature>
<feature type="sequence variant" id="VAR_055962" description="In dbSNP:rs35406888.">
    <original>N</original>
    <variation>S</variation>
    <location>
        <position position="178"/>
    </location>
</feature>
<feature type="sequence conflict" description="In Ref. 1; CAA30376 and 2; AAG42145." evidence="3" ref="1 2">
    <original>T</original>
    <variation>A</variation>
    <location>
        <position position="161"/>
    </location>
</feature>